<keyword id="KW-0007">Acetylation</keyword>
<keyword id="KW-0963">Cytoplasm</keyword>
<keyword id="KW-0597">Phosphoprotein</keyword>
<keyword id="KW-1185">Reference proteome</keyword>
<keyword id="KW-0819">tRNA processing</keyword>
<dbReference type="EMBL" id="DAAA02046253">
    <property type="status" value="NOT_ANNOTATED_CDS"/>
    <property type="molecule type" value="Genomic_DNA"/>
</dbReference>
<dbReference type="EMBL" id="BC102862">
    <property type="protein sequence ID" value="AAI02863.1"/>
    <property type="molecule type" value="mRNA"/>
</dbReference>
<dbReference type="RefSeq" id="NP_001030521.1">
    <property type="nucleotide sequence ID" value="NM_001035444.2"/>
</dbReference>
<dbReference type="FunCoup" id="Q3SZG9">
    <property type="interactions" value="4098"/>
</dbReference>
<dbReference type="STRING" id="9913.ENSBTAP00000065989"/>
<dbReference type="PaxDb" id="9913-ENSBTAP00000032466"/>
<dbReference type="Ensembl" id="ENSBTAT00000032535.4">
    <property type="protein sequence ID" value="ENSBTAP00000032466.3"/>
    <property type="gene ID" value="ENSBTAG00000020943.6"/>
</dbReference>
<dbReference type="GeneID" id="614194"/>
<dbReference type="KEGG" id="bta:614194"/>
<dbReference type="CTD" id="348180"/>
<dbReference type="VEuPathDB" id="HostDB:ENSBTAG00000020943"/>
<dbReference type="VGNC" id="VGNC:27824">
    <property type="gene designation" value="CTU2"/>
</dbReference>
<dbReference type="eggNOG" id="KOG2594">
    <property type="taxonomic scope" value="Eukaryota"/>
</dbReference>
<dbReference type="GeneTree" id="ENSGT00390000008797"/>
<dbReference type="HOGENOM" id="CLU_024534_2_0_1"/>
<dbReference type="InParanoid" id="Q3SZG9"/>
<dbReference type="OrthoDB" id="25129at2759"/>
<dbReference type="TreeFam" id="TF313203"/>
<dbReference type="UniPathway" id="UPA00988"/>
<dbReference type="Proteomes" id="UP000009136">
    <property type="component" value="Chromosome 18"/>
</dbReference>
<dbReference type="Bgee" id="ENSBTAG00000020943">
    <property type="expression patterns" value="Expressed in digestive system secreted substance and 108 other cell types or tissues"/>
</dbReference>
<dbReference type="GO" id="GO:0005829">
    <property type="term" value="C:cytosol"/>
    <property type="evidence" value="ECO:0000250"/>
    <property type="project" value="UniProtKB"/>
</dbReference>
<dbReference type="GO" id="GO:0016779">
    <property type="term" value="F:nucleotidyltransferase activity"/>
    <property type="evidence" value="ECO:0007669"/>
    <property type="project" value="UniProtKB-UniRule"/>
</dbReference>
<dbReference type="GO" id="GO:0016783">
    <property type="term" value="F:sulfurtransferase activity"/>
    <property type="evidence" value="ECO:0000318"/>
    <property type="project" value="GO_Central"/>
</dbReference>
<dbReference type="GO" id="GO:0000049">
    <property type="term" value="F:tRNA binding"/>
    <property type="evidence" value="ECO:0007669"/>
    <property type="project" value="InterPro"/>
</dbReference>
<dbReference type="GO" id="GO:0032447">
    <property type="term" value="P:protein urmylation"/>
    <property type="evidence" value="ECO:0007669"/>
    <property type="project" value="UniProtKB-UniRule"/>
</dbReference>
<dbReference type="GO" id="GO:0034227">
    <property type="term" value="P:tRNA thio-modification"/>
    <property type="evidence" value="ECO:0000250"/>
    <property type="project" value="UniProtKB"/>
</dbReference>
<dbReference type="GO" id="GO:0002143">
    <property type="term" value="P:tRNA wobble position uridine thiolation"/>
    <property type="evidence" value="ECO:0000318"/>
    <property type="project" value="GO_Central"/>
</dbReference>
<dbReference type="GO" id="GO:0002098">
    <property type="term" value="P:tRNA wobble uridine modification"/>
    <property type="evidence" value="ECO:0000250"/>
    <property type="project" value="UniProtKB"/>
</dbReference>
<dbReference type="Gene3D" id="3.40.50.620">
    <property type="entry name" value="HUPs"/>
    <property type="match status" value="1"/>
</dbReference>
<dbReference type="HAMAP" id="MF_03054">
    <property type="entry name" value="CTU2"/>
    <property type="match status" value="1"/>
</dbReference>
<dbReference type="InterPro" id="IPR019407">
    <property type="entry name" value="CTU2"/>
</dbReference>
<dbReference type="InterPro" id="IPR014729">
    <property type="entry name" value="Rossmann-like_a/b/a_fold"/>
</dbReference>
<dbReference type="PANTHER" id="PTHR20882">
    <property type="entry name" value="CYTOPLASMIC TRNA 2-THIOLATION PROTEIN 2"/>
    <property type="match status" value="1"/>
</dbReference>
<dbReference type="PANTHER" id="PTHR20882:SF14">
    <property type="entry name" value="CYTOPLASMIC TRNA 2-THIOLATION PROTEIN 2"/>
    <property type="match status" value="1"/>
</dbReference>
<dbReference type="Pfam" id="PF10288">
    <property type="entry name" value="CTU2"/>
    <property type="match status" value="1"/>
</dbReference>
<dbReference type="SUPFAM" id="SSF52402">
    <property type="entry name" value="Adenine nucleotide alpha hydrolases-like"/>
    <property type="match status" value="1"/>
</dbReference>
<feature type="initiator methionine" description="Removed" evidence="1">
    <location>
        <position position="1"/>
    </location>
</feature>
<feature type="chain" id="PRO_0000289174" description="Cytoplasmic tRNA 2-thiolation protein 2">
    <location>
        <begin position="2"/>
        <end position="501"/>
    </location>
</feature>
<feature type="region of interest" description="Disordered" evidence="3">
    <location>
        <begin position="1"/>
        <end position="23"/>
    </location>
</feature>
<feature type="region of interest" description="Disordered" evidence="3">
    <location>
        <begin position="192"/>
        <end position="214"/>
    </location>
</feature>
<feature type="compositionally biased region" description="Basic and acidic residues" evidence="3">
    <location>
        <begin position="1"/>
        <end position="12"/>
    </location>
</feature>
<feature type="modified residue" description="N-acetylcysteine" evidence="1">
    <location>
        <position position="2"/>
    </location>
</feature>
<feature type="modified residue" description="Phosphoserine" evidence="1">
    <location>
        <position position="492"/>
    </location>
</feature>
<feature type="sequence conflict" description="In Ref. 2; AAI02863." evidence="4" ref="2">
    <original>F</original>
    <variation>I</variation>
    <location>
        <position position="223"/>
    </location>
</feature>
<accession>Q3SZG9</accession>
<accession>F1MJ97</accession>
<reference key="1">
    <citation type="journal article" date="2009" name="Genome Biol.">
        <title>A whole-genome assembly of the domestic cow, Bos taurus.</title>
        <authorList>
            <person name="Zimin A.V."/>
            <person name="Delcher A.L."/>
            <person name="Florea L."/>
            <person name="Kelley D.R."/>
            <person name="Schatz M.C."/>
            <person name="Puiu D."/>
            <person name="Hanrahan F."/>
            <person name="Pertea G."/>
            <person name="Van Tassell C.P."/>
            <person name="Sonstegard T.S."/>
            <person name="Marcais G."/>
            <person name="Roberts M."/>
            <person name="Subramanian P."/>
            <person name="Yorke J.A."/>
            <person name="Salzberg S.L."/>
        </authorList>
    </citation>
    <scope>NUCLEOTIDE SEQUENCE [LARGE SCALE GENOMIC DNA]</scope>
    <source>
        <strain>Hereford</strain>
    </source>
</reference>
<reference key="2">
    <citation type="submission" date="2005-08" db="EMBL/GenBank/DDBJ databases">
        <authorList>
            <consortium name="NIH - Mammalian Gene Collection (MGC) project"/>
        </authorList>
    </citation>
    <scope>NUCLEOTIDE SEQUENCE [LARGE SCALE MRNA]</scope>
    <source>
        <strain>Hereford</strain>
        <tissue>Testis</tissue>
    </source>
</reference>
<name>CTU2_BOVIN</name>
<comment type="function">
    <text evidence="2">Plays a central role in 2-thiolation of mcm(5)S(2)U at tRNA wobble positions of tRNA(Lys), tRNA(Glu) and tRNA(Gln). May act by forming a heterodimer with CTU1/ATPBD3 that ligates sulfur from thiocarboxylated URM1 onto the uridine of tRNAs at wobble position.</text>
</comment>
<comment type="pathway">
    <text evidence="2">tRNA modification; 5-methoxycarbonylmethyl-2-thiouridine-tRNA biosynthesis.</text>
</comment>
<comment type="subunit">
    <text evidence="2">Component of a complex at least composed of URM1, CTU2/NCS2 and CTU1/ATPBD3.</text>
</comment>
<comment type="subcellular location">
    <subcellularLocation>
        <location evidence="2">Cytoplasm</location>
    </subcellularLocation>
</comment>
<comment type="similarity">
    <text evidence="2">Belongs to the CTU2/NCS2 family.</text>
</comment>
<organism>
    <name type="scientific">Bos taurus</name>
    <name type="common">Bovine</name>
    <dbReference type="NCBI Taxonomy" id="9913"/>
    <lineage>
        <taxon>Eukaryota</taxon>
        <taxon>Metazoa</taxon>
        <taxon>Chordata</taxon>
        <taxon>Craniata</taxon>
        <taxon>Vertebrata</taxon>
        <taxon>Euteleostomi</taxon>
        <taxon>Mammalia</taxon>
        <taxon>Eutheria</taxon>
        <taxon>Laurasiatheria</taxon>
        <taxon>Artiodactyla</taxon>
        <taxon>Ruminantia</taxon>
        <taxon>Pecora</taxon>
        <taxon>Bovidae</taxon>
        <taxon>Bovinae</taxon>
        <taxon>Bos</taxon>
    </lineage>
</organism>
<proteinExistence type="evidence at transcript level"/>
<sequence>MCEMSEEYRESAPKGPPPPRLGTGDQKCVKCKEGLPVVVIRAGDAFCRDCFKALYVHKFRAMLGKSRLIFPGEKVLLAWSGGPSSSSMVWQVLEGLSRDSAKRLRFVPGVVYIDEGAACGQSPEDRARTLAEVKLALQTTGFPWHAVALEEVFSLPPSALRCSAQEAAGTEGAYKAAVDSFLQQQHALGTNGVERQSQHCAQDPQSPTGPPTTAQTQALSRLFDSVKTLTAKEELLQTLRTHLILHVARNHGYSKVMTGDSCTRLAIKLMTSLALGRGAFLAWDTGFSDERHGDVVVVRPMREHTLKEVAFYNRLFAVPSICTPALDTKAPEKASIHRLMEAFILRLQAQFPSTVSTVYRTSEKLVKAPRAGCAAGPRCLLCMCTLDVDTADSATAFGAQTSHLPQMQTPVTQARAAAGPCCCAGMGGAPGCCKREDPRAQVMEQLCYGCRVNMKDLPSLELLPPYILSEAQLRSQRATAEQEIREYLLGDSEDEAGTGES</sequence>
<evidence type="ECO:0000250" key="1">
    <source>
        <dbReference type="UniProtKB" id="Q2VPK5"/>
    </source>
</evidence>
<evidence type="ECO:0000255" key="2">
    <source>
        <dbReference type="HAMAP-Rule" id="MF_03054"/>
    </source>
</evidence>
<evidence type="ECO:0000256" key="3">
    <source>
        <dbReference type="SAM" id="MobiDB-lite"/>
    </source>
</evidence>
<evidence type="ECO:0000305" key="4"/>
<protein>
    <recommendedName>
        <fullName evidence="2">Cytoplasmic tRNA 2-thiolation protein 2</fullName>
    </recommendedName>
</protein>
<gene>
    <name evidence="2" type="primary">CTU2</name>
    <name evidence="2" type="synonym">NCS2</name>
</gene>